<reference key="1">
    <citation type="journal article" date="2004" name="Nat. Genet.">
        <title>Evidence in the Legionella pneumophila genome for exploitation of host cell functions and high genome plasticity.</title>
        <authorList>
            <person name="Cazalet C."/>
            <person name="Rusniok C."/>
            <person name="Brueggemann H."/>
            <person name="Zidane N."/>
            <person name="Magnier A."/>
            <person name="Ma L."/>
            <person name="Tichit M."/>
            <person name="Jarraud S."/>
            <person name="Bouchier C."/>
            <person name="Vandenesch F."/>
            <person name="Kunst F."/>
            <person name="Etienne J."/>
            <person name="Glaser P."/>
            <person name="Buchrieser C."/>
        </authorList>
    </citation>
    <scope>NUCLEOTIDE SEQUENCE [LARGE SCALE GENOMIC DNA]</scope>
    <source>
        <strain>Paris</strain>
    </source>
</reference>
<proteinExistence type="inferred from homology"/>
<feature type="chain" id="PRO_0000181107" description="Large ribosomal subunit protein bL27">
    <location>
        <begin position="1"/>
        <end position="92"/>
    </location>
</feature>
<feature type="region of interest" description="Disordered" evidence="2">
    <location>
        <begin position="1"/>
        <end position="20"/>
    </location>
</feature>
<gene>
    <name evidence="1" type="primary">rpmA</name>
    <name type="ordered locus">lpp2703</name>
</gene>
<protein>
    <recommendedName>
        <fullName evidence="1">Large ribosomal subunit protein bL27</fullName>
    </recommendedName>
    <alternativeName>
        <fullName evidence="3">50S ribosomal protein L27</fullName>
    </alternativeName>
</protein>
<name>RL27_LEGPA</name>
<evidence type="ECO:0000255" key="1">
    <source>
        <dbReference type="HAMAP-Rule" id="MF_00539"/>
    </source>
</evidence>
<evidence type="ECO:0000256" key="2">
    <source>
        <dbReference type="SAM" id="MobiDB-lite"/>
    </source>
</evidence>
<evidence type="ECO:0000305" key="3"/>
<dbReference type="EMBL" id="CR628336">
    <property type="protein sequence ID" value="CAH13856.1"/>
    <property type="molecule type" value="Genomic_DNA"/>
</dbReference>
<dbReference type="RefSeq" id="WP_010948350.1">
    <property type="nucleotide sequence ID" value="NC_006368.1"/>
</dbReference>
<dbReference type="SMR" id="Q5X1P0"/>
<dbReference type="GeneID" id="57036649"/>
<dbReference type="KEGG" id="lpp:lpp2703"/>
<dbReference type="LegioList" id="lpp2703"/>
<dbReference type="HOGENOM" id="CLU_095424_4_1_6"/>
<dbReference type="GO" id="GO:0022625">
    <property type="term" value="C:cytosolic large ribosomal subunit"/>
    <property type="evidence" value="ECO:0007669"/>
    <property type="project" value="TreeGrafter"/>
</dbReference>
<dbReference type="GO" id="GO:0003735">
    <property type="term" value="F:structural constituent of ribosome"/>
    <property type="evidence" value="ECO:0007669"/>
    <property type="project" value="InterPro"/>
</dbReference>
<dbReference type="GO" id="GO:0006412">
    <property type="term" value="P:translation"/>
    <property type="evidence" value="ECO:0007669"/>
    <property type="project" value="UniProtKB-UniRule"/>
</dbReference>
<dbReference type="FunFam" id="2.40.50.100:FF:000001">
    <property type="entry name" value="50S ribosomal protein L27"/>
    <property type="match status" value="1"/>
</dbReference>
<dbReference type="Gene3D" id="2.40.50.100">
    <property type="match status" value="1"/>
</dbReference>
<dbReference type="HAMAP" id="MF_00539">
    <property type="entry name" value="Ribosomal_bL27"/>
    <property type="match status" value="1"/>
</dbReference>
<dbReference type="InterPro" id="IPR001684">
    <property type="entry name" value="Ribosomal_bL27"/>
</dbReference>
<dbReference type="InterPro" id="IPR018261">
    <property type="entry name" value="Ribosomal_bL27_CS"/>
</dbReference>
<dbReference type="NCBIfam" id="TIGR00062">
    <property type="entry name" value="L27"/>
    <property type="match status" value="1"/>
</dbReference>
<dbReference type="PANTHER" id="PTHR15893:SF0">
    <property type="entry name" value="LARGE RIBOSOMAL SUBUNIT PROTEIN BL27M"/>
    <property type="match status" value="1"/>
</dbReference>
<dbReference type="PANTHER" id="PTHR15893">
    <property type="entry name" value="RIBOSOMAL PROTEIN L27"/>
    <property type="match status" value="1"/>
</dbReference>
<dbReference type="Pfam" id="PF01016">
    <property type="entry name" value="Ribosomal_L27"/>
    <property type="match status" value="1"/>
</dbReference>
<dbReference type="PRINTS" id="PR00063">
    <property type="entry name" value="RIBOSOMALL27"/>
</dbReference>
<dbReference type="SUPFAM" id="SSF110324">
    <property type="entry name" value="Ribosomal L27 protein-like"/>
    <property type="match status" value="1"/>
</dbReference>
<dbReference type="PROSITE" id="PS00831">
    <property type="entry name" value="RIBOSOMAL_L27"/>
    <property type="match status" value="1"/>
</dbReference>
<comment type="similarity">
    <text evidence="1">Belongs to the bacterial ribosomal protein bL27 family.</text>
</comment>
<accession>Q5X1P0</accession>
<organism>
    <name type="scientific">Legionella pneumophila (strain Paris)</name>
    <dbReference type="NCBI Taxonomy" id="297246"/>
    <lineage>
        <taxon>Bacteria</taxon>
        <taxon>Pseudomonadati</taxon>
        <taxon>Pseudomonadota</taxon>
        <taxon>Gammaproteobacteria</taxon>
        <taxon>Legionellales</taxon>
        <taxon>Legionellaceae</taxon>
        <taxon>Legionella</taxon>
    </lineage>
</organism>
<sequence>MAHKKAGGSTRNGRDSNPKYLGVKRFGGQFVNAGEIIVRQRGTRFHPGPGVGCGRDHTLYALVEGLVQFTTKGEKNRKYVTILPEQREEAAS</sequence>
<keyword id="KW-0687">Ribonucleoprotein</keyword>
<keyword id="KW-0689">Ribosomal protein</keyword>